<sequence length="274" mass="31744">WIMGHMVNAIEQVDEFLNLGANAIEFDIDFDKDGIAQITHHGIPCDCGRKCTKKAIFTEYLDNIRQVTTPDDPKFREQLVLLALDLKLQRISSAKAYRAGEDVAKKLLDHYWQRGNSRARAYILLNIPLVEDYEFIRAFKDTLKNEGYESYNDKVGINFTGNEDLDKIRDVLEILGIHKQVWQADGITSCFARGTERLKEALEKRDTPGYNYINKVYAWTLVRKSIMRRSLRLGVDGVMSNNPDRVIKVLKEKEFADKFRLATYNDNPWEKFRG</sequence>
<evidence type="ECO:0000250" key="1">
    <source>
        <dbReference type="UniProtKB" id="A0A0D4WTV1"/>
    </source>
</evidence>
<evidence type="ECO:0000250" key="2">
    <source>
        <dbReference type="UniProtKB" id="A0A0D4WV12"/>
    </source>
</evidence>
<evidence type="ECO:0000250" key="3">
    <source>
        <dbReference type="UniProtKB" id="P0CE80"/>
    </source>
</evidence>
<evidence type="ECO:0000250" key="4">
    <source>
        <dbReference type="UniProtKB" id="Q4ZFU2"/>
    </source>
</evidence>
<evidence type="ECO:0000250" key="5">
    <source>
        <dbReference type="UniProtKB" id="Q8I914"/>
    </source>
</evidence>
<evidence type="ECO:0000303" key="6">
    <source>
    </source>
</evidence>
<evidence type="ECO:0000305" key="7"/>
<evidence type="ECO:0000305" key="8">
    <source>
    </source>
</evidence>
<organism>
    <name type="scientific">Sicarius cf. damarensis (strain GJB-2008)</name>
    <name type="common">Six-eyed sand spider</name>
    <dbReference type="NCBI Taxonomy" id="575956"/>
    <lineage>
        <taxon>Eukaryota</taxon>
        <taxon>Metazoa</taxon>
        <taxon>Ecdysozoa</taxon>
        <taxon>Arthropoda</taxon>
        <taxon>Chelicerata</taxon>
        <taxon>Arachnida</taxon>
        <taxon>Araneae</taxon>
        <taxon>Araneomorphae</taxon>
        <taxon>Haplogynae</taxon>
        <taxon>Scytodoidea</taxon>
        <taxon>Sicariidae</taxon>
        <taxon>Sicarius</taxon>
    </lineage>
</organism>
<keyword id="KW-0204">Cytolysis</keyword>
<keyword id="KW-1061">Dermonecrotic toxin</keyword>
<keyword id="KW-1015">Disulfide bond</keyword>
<keyword id="KW-0354">Hemolysis</keyword>
<keyword id="KW-0442">Lipid degradation</keyword>
<keyword id="KW-0443">Lipid metabolism</keyword>
<keyword id="KW-0456">Lyase</keyword>
<keyword id="KW-0460">Magnesium</keyword>
<keyword id="KW-0479">Metal-binding</keyword>
<keyword id="KW-0964">Secreted</keyword>
<keyword id="KW-0800">Toxin</keyword>
<comment type="function">
    <text evidence="1 3">Dermonecrotic toxins cleave the phosphodiester linkage between the phosphate and headgroup of certain phospholipids (sphingolipid and lysolipid substrates), forming an alcohol (often choline) and a cyclic phosphate (By similarity). This toxin acts on sphingomyelin (SM) (By similarity). It may also act on ceramide phosphoethanolamine (CPE), lysophosphatidylcholine (LPC) and lysophosphatidylethanolamine (LPE), but not on lysophosphatidylserine (LPS), and lysophosphatidylglycerol (LPG) (By similarity). It acts by transphosphatidylation, releasing exclusively cyclic phosphate products as second products (By similarity). Induces dermonecrosis, hemolysis, increased vascular permeability, edema, inflammatory response, and platelet aggregation (By similarity).</text>
</comment>
<comment type="catalytic activity">
    <reaction evidence="1">
        <text>an N-(acyl)-sphingosylphosphocholine = an N-(acyl)-sphingosyl-1,3-cyclic phosphate + choline</text>
        <dbReference type="Rhea" id="RHEA:60652"/>
        <dbReference type="ChEBI" id="CHEBI:15354"/>
        <dbReference type="ChEBI" id="CHEBI:64583"/>
        <dbReference type="ChEBI" id="CHEBI:143892"/>
    </reaction>
</comment>
<comment type="catalytic activity">
    <reaction evidence="1">
        <text>an N-(acyl)-sphingosylphosphoethanolamine = an N-(acyl)-sphingosyl-1,3-cyclic phosphate + ethanolamine</text>
        <dbReference type="Rhea" id="RHEA:60648"/>
        <dbReference type="ChEBI" id="CHEBI:57603"/>
        <dbReference type="ChEBI" id="CHEBI:143891"/>
        <dbReference type="ChEBI" id="CHEBI:143892"/>
    </reaction>
</comment>
<comment type="catalytic activity">
    <reaction evidence="1">
        <text>a 1-acyl-sn-glycero-3-phosphocholine = a 1-acyl-sn-glycero-2,3-cyclic phosphate + choline</text>
        <dbReference type="Rhea" id="RHEA:60700"/>
        <dbReference type="ChEBI" id="CHEBI:15354"/>
        <dbReference type="ChEBI" id="CHEBI:58168"/>
        <dbReference type="ChEBI" id="CHEBI:143947"/>
    </reaction>
</comment>
<comment type="catalytic activity">
    <reaction evidence="1">
        <text>a 1-acyl-sn-glycero-3-phosphoethanolamine = a 1-acyl-sn-glycero-2,3-cyclic phosphate + ethanolamine</text>
        <dbReference type="Rhea" id="RHEA:60704"/>
        <dbReference type="ChEBI" id="CHEBI:57603"/>
        <dbReference type="ChEBI" id="CHEBI:64381"/>
        <dbReference type="ChEBI" id="CHEBI:143947"/>
    </reaction>
</comment>
<comment type="cofactor">
    <cofactor evidence="5">
        <name>Mg(2+)</name>
        <dbReference type="ChEBI" id="CHEBI:18420"/>
    </cofactor>
    <text evidence="5">Binds 1 Mg(2+) ion per subunit.</text>
</comment>
<comment type="subcellular location">
    <subcellularLocation>
        <location evidence="8">Secreted</location>
    </subcellularLocation>
</comment>
<comment type="tissue specificity">
    <text evidence="8">Expressed by the venom gland.</text>
</comment>
<comment type="similarity">
    <text evidence="7">Belongs to the arthropod phospholipase D family. Class II subfamily.</text>
</comment>
<comment type="caution">
    <text evidence="1 2 4">The most common activity assay for dermonecrotic toxins detects enzymatic activity by monitoring choline release from substrate. Liberation of choline from sphingomyelin (SM) or lysophosphatidylcholine (LPC) is commonly assumed to result from substrate hydrolysis, giving either ceramide-1-phosphate (C1P) or lysophosphatidic acid (LPA), respectively, as a second product. However, two studies from Lajoie and colleagues (2013 and 2015) report the observation of exclusive formation of cyclic phosphate products as second products, resulting from intramolecular transphosphatidylation. Cyclic phosphates have vastly different biological properties from their monoester counterparts, and they may be relevant to the pathology of brown spider envenomation.</text>
</comment>
<proteinExistence type="evidence at transcript level"/>
<protein>
    <recommendedName>
        <fullName evidence="6">Dermonecrotic toxin SdSicTox-betaIIB1bvii</fullName>
        <ecNumber evidence="4">4.6.1.-</ecNumber>
    </recommendedName>
    <alternativeName>
        <fullName>Phospholipase D</fullName>
        <shortName>PLD</shortName>
    </alternativeName>
    <alternativeName>
        <fullName>Sphingomyelin phosphodiesterase D</fullName>
        <shortName>SMD</shortName>
        <shortName>SMase D</shortName>
        <shortName>Sphingomyelinase D</shortName>
    </alternativeName>
</protein>
<reference key="1">
    <citation type="journal article" date="2009" name="Mol. Biol. Evol.">
        <title>Molecular evolution, functional variation, and proposed nomenclature of the gene family that includes sphingomyelinase D in sicariid spider venoms.</title>
        <authorList>
            <person name="Binford G.J."/>
            <person name="Bodner M.R."/>
            <person name="Cordes M.H."/>
            <person name="Baldwin K.L."/>
            <person name="Rynerson M.R."/>
            <person name="Burns S.N."/>
            <person name="Zobel-Thropp P.A."/>
        </authorList>
    </citation>
    <scope>NUCLEOTIDE SEQUENCE [MRNA]</scope>
    <scope>NOMENCLATURE</scope>
    <source>
        <tissue>Venom gland</tissue>
    </source>
</reference>
<name>B2KB7_SICCD</name>
<dbReference type="EC" id="4.6.1.-" evidence="4"/>
<dbReference type="EMBL" id="FJ171516">
    <property type="protein sequence ID" value="ACN49012.1"/>
    <property type="molecule type" value="mRNA"/>
</dbReference>
<dbReference type="SMR" id="C0JB81"/>
<dbReference type="GO" id="GO:0005576">
    <property type="term" value="C:extracellular region"/>
    <property type="evidence" value="ECO:0007669"/>
    <property type="project" value="UniProtKB-SubCell"/>
</dbReference>
<dbReference type="GO" id="GO:0016829">
    <property type="term" value="F:lyase activity"/>
    <property type="evidence" value="ECO:0007669"/>
    <property type="project" value="UniProtKB-KW"/>
</dbReference>
<dbReference type="GO" id="GO:0046872">
    <property type="term" value="F:metal ion binding"/>
    <property type="evidence" value="ECO:0007669"/>
    <property type="project" value="UniProtKB-KW"/>
</dbReference>
<dbReference type="GO" id="GO:0008081">
    <property type="term" value="F:phosphoric diester hydrolase activity"/>
    <property type="evidence" value="ECO:0007669"/>
    <property type="project" value="InterPro"/>
</dbReference>
<dbReference type="GO" id="GO:0090729">
    <property type="term" value="F:toxin activity"/>
    <property type="evidence" value="ECO:0007669"/>
    <property type="project" value="UniProtKB-KW"/>
</dbReference>
<dbReference type="GO" id="GO:0031640">
    <property type="term" value="P:killing of cells of another organism"/>
    <property type="evidence" value="ECO:0007669"/>
    <property type="project" value="UniProtKB-KW"/>
</dbReference>
<dbReference type="GO" id="GO:0016042">
    <property type="term" value="P:lipid catabolic process"/>
    <property type="evidence" value="ECO:0007669"/>
    <property type="project" value="UniProtKB-KW"/>
</dbReference>
<dbReference type="CDD" id="cd08576">
    <property type="entry name" value="GDPD_like_SMaseD_PLD"/>
    <property type="match status" value="1"/>
</dbReference>
<dbReference type="Gene3D" id="3.20.20.190">
    <property type="entry name" value="Phosphatidylinositol (PI) phosphodiesterase"/>
    <property type="match status" value="1"/>
</dbReference>
<dbReference type="InterPro" id="IPR017946">
    <property type="entry name" value="PLC-like_Pdiesterase_TIM-brl"/>
</dbReference>
<dbReference type="SUPFAM" id="SSF51695">
    <property type="entry name" value="PLC-like phosphodiesterases"/>
    <property type="match status" value="1"/>
</dbReference>
<accession>C0JB81</accession>
<feature type="chain" id="PRO_0000392892" description="Dermonecrotic toxin SdSicTox-betaIIB1bvii">
    <location>
        <begin position="1" status="less than"/>
        <end position="274"/>
    </location>
</feature>
<feature type="active site" evidence="5">
    <location>
        <position position="5"/>
    </location>
</feature>
<feature type="active site" description="Nucleophile" evidence="5">
    <location>
        <position position="41"/>
    </location>
</feature>
<feature type="binding site" evidence="5">
    <location>
        <position position="25"/>
    </location>
    <ligand>
        <name>Mg(2+)</name>
        <dbReference type="ChEBI" id="CHEBI:18420"/>
    </ligand>
</feature>
<feature type="binding site" evidence="5">
    <location>
        <position position="27"/>
    </location>
    <ligand>
        <name>Mg(2+)</name>
        <dbReference type="ChEBI" id="CHEBI:18420"/>
    </ligand>
</feature>
<feature type="binding site" evidence="5">
    <location>
        <position position="85"/>
    </location>
    <ligand>
        <name>Mg(2+)</name>
        <dbReference type="ChEBI" id="CHEBI:18420"/>
    </ligand>
</feature>
<feature type="disulfide bond" evidence="3">
    <location>
        <begin position="45"/>
        <end position="51"/>
    </location>
</feature>
<feature type="disulfide bond" evidence="3">
    <location>
        <begin position="47"/>
        <end position="190"/>
    </location>
</feature>
<feature type="non-terminal residue">
    <location>
        <position position="1"/>
    </location>
</feature>